<sequence>MAAKEVKFGNEARIKMLEGVNILADAVKVTLGPKGRNVVLDKSFGAPTITKDGVSVAREIELEDKFQNMGAQMVKEVASKANDAAGDGTTTATVLAQAIVNEGLKAVAAGMNPMDLKRGIDKAVIAAVAELQVLSQPCADNNAIAQVGTISANSDEKVGRLIAEAMDKVGRDGVITVEDGQGLDDELAVVEGMQFDRGYLSPYFVNKPETGAVELDDPFILLVDKKVSNIREMLPVLEGVAKAGKPLLIVAEDVEGEALATLVVNTMRGIVKVAAVKAPGFGDRRKAMLQDIAMLTGGTVISEEVGMELEKATLEDLGRAKRIVITKENTTIIDGVGDAALIESRVAQIRQQIEETSSDYDREKLQERVAKLAGGVAVIKVGAATEVEMKEKKARVDDALHATRAAVEEGVVAGGGVALVRVAAKLAGLRGDNEDQNVGIKVALRAMEAPLRQIVINAGEEASVIANAVKNGEGNFGYNAYTEQYGDMLAMGILDPTKVTRSALQFASSIAGLMITTECMITELPKKDTPAMPDMGGMGGMGMM</sequence>
<proteinExistence type="inferred from homology"/>
<reference key="1">
    <citation type="journal article" date="2008" name="BMC Genomics">
        <title>The genome of Aeromonas salmonicida subsp. salmonicida A449: insights into the evolution of a fish pathogen.</title>
        <authorList>
            <person name="Reith M.E."/>
            <person name="Singh R.K."/>
            <person name="Curtis B."/>
            <person name="Boyd J.M."/>
            <person name="Bouevitch A."/>
            <person name="Kimball J."/>
            <person name="Munholland J."/>
            <person name="Murphy C."/>
            <person name="Sarty D."/>
            <person name="Williams J."/>
            <person name="Nash J.H."/>
            <person name="Johnson S.C."/>
            <person name="Brown L.L."/>
        </authorList>
    </citation>
    <scope>NUCLEOTIDE SEQUENCE [LARGE SCALE GENOMIC DNA]</scope>
    <source>
        <strain>A449</strain>
    </source>
</reference>
<evidence type="ECO:0000255" key="1">
    <source>
        <dbReference type="HAMAP-Rule" id="MF_00600"/>
    </source>
</evidence>
<protein>
    <recommendedName>
        <fullName evidence="1">Chaperonin GroEL</fullName>
        <ecNumber evidence="1">5.6.1.7</ecNumber>
    </recommendedName>
    <alternativeName>
        <fullName evidence="1">60 kDa chaperonin</fullName>
    </alternativeName>
    <alternativeName>
        <fullName evidence="1">Chaperonin-60</fullName>
        <shortName evidence="1">Cpn60</shortName>
    </alternativeName>
</protein>
<organism>
    <name type="scientific">Aeromonas salmonicida (strain A449)</name>
    <dbReference type="NCBI Taxonomy" id="382245"/>
    <lineage>
        <taxon>Bacteria</taxon>
        <taxon>Pseudomonadati</taxon>
        <taxon>Pseudomonadota</taxon>
        <taxon>Gammaproteobacteria</taxon>
        <taxon>Aeromonadales</taxon>
        <taxon>Aeromonadaceae</taxon>
        <taxon>Aeromonas</taxon>
    </lineage>
</organism>
<dbReference type="EC" id="5.6.1.7" evidence="1"/>
<dbReference type="EMBL" id="CP000644">
    <property type="protein sequence ID" value="ABO91402.1"/>
    <property type="molecule type" value="Genomic_DNA"/>
</dbReference>
<dbReference type="RefSeq" id="WP_005318975.1">
    <property type="nucleotide sequence ID" value="NC_009348.1"/>
</dbReference>
<dbReference type="SMR" id="A4SR80"/>
<dbReference type="STRING" id="29491.GCA_000820065_04368"/>
<dbReference type="KEGG" id="asa:ASA_3431"/>
<dbReference type="eggNOG" id="COG0459">
    <property type="taxonomic scope" value="Bacteria"/>
</dbReference>
<dbReference type="HOGENOM" id="CLU_016503_3_0_6"/>
<dbReference type="Proteomes" id="UP000000225">
    <property type="component" value="Chromosome"/>
</dbReference>
<dbReference type="GO" id="GO:0005737">
    <property type="term" value="C:cytoplasm"/>
    <property type="evidence" value="ECO:0007669"/>
    <property type="project" value="UniProtKB-SubCell"/>
</dbReference>
<dbReference type="GO" id="GO:0005524">
    <property type="term" value="F:ATP binding"/>
    <property type="evidence" value="ECO:0007669"/>
    <property type="project" value="UniProtKB-UniRule"/>
</dbReference>
<dbReference type="GO" id="GO:0140662">
    <property type="term" value="F:ATP-dependent protein folding chaperone"/>
    <property type="evidence" value="ECO:0007669"/>
    <property type="project" value="InterPro"/>
</dbReference>
<dbReference type="GO" id="GO:0016853">
    <property type="term" value="F:isomerase activity"/>
    <property type="evidence" value="ECO:0007669"/>
    <property type="project" value="UniProtKB-KW"/>
</dbReference>
<dbReference type="GO" id="GO:0051082">
    <property type="term" value="F:unfolded protein binding"/>
    <property type="evidence" value="ECO:0007669"/>
    <property type="project" value="UniProtKB-UniRule"/>
</dbReference>
<dbReference type="GO" id="GO:0042026">
    <property type="term" value="P:protein refolding"/>
    <property type="evidence" value="ECO:0007669"/>
    <property type="project" value="UniProtKB-UniRule"/>
</dbReference>
<dbReference type="CDD" id="cd03344">
    <property type="entry name" value="GroEL"/>
    <property type="match status" value="1"/>
</dbReference>
<dbReference type="FunFam" id="1.10.560.10:FF:000001">
    <property type="entry name" value="60 kDa chaperonin"/>
    <property type="match status" value="1"/>
</dbReference>
<dbReference type="FunFam" id="3.50.7.10:FF:000001">
    <property type="entry name" value="60 kDa chaperonin"/>
    <property type="match status" value="1"/>
</dbReference>
<dbReference type="Gene3D" id="3.50.7.10">
    <property type="entry name" value="GroEL"/>
    <property type="match status" value="1"/>
</dbReference>
<dbReference type="Gene3D" id="1.10.560.10">
    <property type="entry name" value="GroEL-like equatorial domain"/>
    <property type="match status" value="1"/>
</dbReference>
<dbReference type="Gene3D" id="3.30.260.10">
    <property type="entry name" value="TCP-1-like chaperonin intermediate domain"/>
    <property type="match status" value="1"/>
</dbReference>
<dbReference type="HAMAP" id="MF_00600">
    <property type="entry name" value="CH60"/>
    <property type="match status" value="1"/>
</dbReference>
<dbReference type="InterPro" id="IPR018370">
    <property type="entry name" value="Chaperonin_Cpn60_CS"/>
</dbReference>
<dbReference type="InterPro" id="IPR001844">
    <property type="entry name" value="Cpn60/GroEL"/>
</dbReference>
<dbReference type="InterPro" id="IPR002423">
    <property type="entry name" value="Cpn60/GroEL/TCP-1"/>
</dbReference>
<dbReference type="InterPro" id="IPR027409">
    <property type="entry name" value="GroEL-like_apical_dom_sf"/>
</dbReference>
<dbReference type="InterPro" id="IPR027413">
    <property type="entry name" value="GROEL-like_equatorial_sf"/>
</dbReference>
<dbReference type="InterPro" id="IPR027410">
    <property type="entry name" value="TCP-1-like_intermed_sf"/>
</dbReference>
<dbReference type="NCBIfam" id="TIGR02348">
    <property type="entry name" value="GroEL"/>
    <property type="match status" value="1"/>
</dbReference>
<dbReference type="NCBIfam" id="NF000592">
    <property type="entry name" value="PRK00013.1"/>
    <property type="match status" value="1"/>
</dbReference>
<dbReference type="NCBIfam" id="NF009487">
    <property type="entry name" value="PRK12849.1"/>
    <property type="match status" value="1"/>
</dbReference>
<dbReference type="NCBIfam" id="NF009488">
    <property type="entry name" value="PRK12850.1"/>
    <property type="match status" value="1"/>
</dbReference>
<dbReference type="NCBIfam" id="NF009489">
    <property type="entry name" value="PRK12851.1"/>
    <property type="match status" value="1"/>
</dbReference>
<dbReference type="PANTHER" id="PTHR45633">
    <property type="entry name" value="60 KDA HEAT SHOCK PROTEIN, MITOCHONDRIAL"/>
    <property type="match status" value="1"/>
</dbReference>
<dbReference type="Pfam" id="PF00118">
    <property type="entry name" value="Cpn60_TCP1"/>
    <property type="match status" value="1"/>
</dbReference>
<dbReference type="PRINTS" id="PR00298">
    <property type="entry name" value="CHAPERONIN60"/>
</dbReference>
<dbReference type="SUPFAM" id="SSF52029">
    <property type="entry name" value="GroEL apical domain-like"/>
    <property type="match status" value="1"/>
</dbReference>
<dbReference type="SUPFAM" id="SSF48592">
    <property type="entry name" value="GroEL equatorial domain-like"/>
    <property type="match status" value="1"/>
</dbReference>
<dbReference type="SUPFAM" id="SSF54849">
    <property type="entry name" value="GroEL-intermediate domain like"/>
    <property type="match status" value="1"/>
</dbReference>
<dbReference type="PROSITE" id="PS00296">
    <property type="entry name" value="CHAPERONINS_CPN60"/>
    <property type="match status" value="1"/>
</dbReference>
<accession>A4SR80</accession>
<gene>
    <name evidence="1" type="primary">groEL</name>
    <name evidence="1" type="synonym">groL</name>
    <name type="ordered locus">ASA_3431</name>
</gene>
<name>CH60_AERS4</name>
<keyword id="KW-0067">ATP-binding</keyword>
<keyword id="KW-0143">Chaperone</keyword>
<keyword id="KW-0963">Cytoplasm</keyword>
<keyword id="KW-0413">Isomerase</keyword>
<keyword id="KW-0547">Nucleotide-binding</keyword>
<comment type="function">
    <text evidence="1">Together with its co-chaperonin GroES, plays an essential role in assisting protein folding. The GroEL-GroES system forms a nano-cage that allows encapsulation of the non-native substrate proteins and provides a physical environment optimized to promote and accelerate protein folding.</text>
</comment>
<comment type="catalytic activity">
    <reaction evidence="1">
        <text>ATP + H2O + a folded polypeptide = ADP + phosphate + an unfolded polypeptide.</text>
        <dbReference type="EC" id="5.6.1.7"/>
    </reaction>
</comment>
<comment type="subunit">
    <text evidence="1">Forms a cylinder of 14 subunits composed of two heptameric rings stacked back-to-back. Interacts with the co-chaperonin GroES.</text>
</comment>
<comment type="subcellular location">
    <subcellularLocation>
        <location evidence="1">Cytoplasm</location>
    </subcellularLocation>
</comment>
<comment type="similarity">
    <text evidence="1">Belongs to the chaperonin (HSP60) family.</text>
</comment>
<feature type="chain" id="PRO_1000025749" description="Chaperonin GroEL">
    <location>
        <begin position="1"/>
        <end position="544"/>
    </location>
</feature>
<feature type="binding site" evidence="1">
    <location>
        <begin position="30"/>
        <end position="33"/>
    </location>
    <ligand>
        <name>ATP</name>
        <dbReference type="ChEBI" id="CHEBI:30616"/>
    </ligand>
</feature>
<feature type="binding site" evidence="1">
    <location>
        <position position="51"/>
    </location>
    <ligand>
        <name>ATP</name>
        <dbReference type="ChEBI" id="CHEBI:30616"/>
    </ligand>
</feature>
<feature type="binding site" evidence="1">
    <location>
        <begin position="87"/>
        <end position="91"/>
    </location>
    <ligand>
        <name>ATP</name>
        <dbReference type="ChEBI" id="CHEBI:30616"/>
    </ligand>
</feature>
<feature type="binding site" evidence="1">
    <location>
        <position position="415"/>
    </location>
    <ligand>
        <name>ATP</name>
        <dbReference type="ChEBI" id="CHEBI:30616"/>
    </ligand>
</feature>
<feature type="binding site" evidence="1">
    <location>
        <position position="495"/>
    </location>
    <ligand>
        <name>ATP</name>
        <dbReference type="ChEBI" id="CHEBI:30616"/>
    </ligand>
</feature>